<keyword id="KW-1185">Reference proteome</keyword>
<gene>
    <name type="ordered locus">YML002W</name>
    <name type="ORF">YM8270.01</name>
    <name type="ORF">YM9571.17</name>
</gene>
<dbReference type="EMBL" id="Z49810">
    <property type="protein sequence ID" value="CAA89950.1"/>
    <property type="molecule type" value="Genomic_DNA"/>
</dbReference>
<dbReference type="EMBL" id="Z48613">
    <property type="protein sequence ID" value="CAA88514.1"/>
    <property type="molecule type" value="Genomic_DNA"/>
</dbReference>
<dbReference type="EMBL" id="AY692715">
    <property type="protein sequence ID" value="AAT92734.1"/>
    <property type="molecule type" value="Genomic_DNA"/>
</dbReference>
<dbReference type="EMBL" id="BK006946">
    <property type="protein sequence ID" value="DAA09897.1"/>
    <property type="molecule type" value="Genomic_DNA"/>
</dbReference>
<dbReference type="PIR" id="S55117">
    <property type="entry name" value="S55117"/>
</dbReference>
<dbReference type="SMR" id="P0CF17"/>
<dbReference type="BioGRID" id="35169">
    <property type="interactions" value="117"/>
</dbReference>
<dbReference type="FunCoup" id="P0CF17">
    <property type="interactions" value="36"/>
</dbReference>
<dbReference type="STRING" id="4932.YML002W"/>
<dbReference type="iPTMnet" id="P0CF17"/>
<dbReference type="PaxDb" id="4932-YML002W"/>
<dbReference type="PeptideAtlas" id="P0CF17"/>
<dbReference type="EnsemblFungi" id="YML002W_mRNA">
    <property type="protein sequence ID" value="YML002W"/>
    <property type="gene ID" value="YML002W"/>
</dbReference>
<dbReference type="KEGG" id="sce:YML002W"/>
<dbReference type="AGR" id="SGD:S000004461"/>
<dbReference type="SGD" id="S000004461">
    <property type="gene designation" value="YML002W"/>
</dbReference>
<dbReference type="VEuPathDB" id="FungiDB:YML002W"/>
<dbReference type="eggNOG" id="ENOG502R3ZQ">
    <property type="taxonomic scope" value="Eukaryota"/>
</dbReference>
<dbReference type="GeneTree" id="ENSGT00940000176527"/>
<dbReference type="HOGENOM" id="CLU_008912_0_0_1"/>
<dbReference type="InParanoid" id="P0CF17"/>
<dbReference type="OMA" id="LNCIFNN"/>
<dbReference type="OrthoDB" id="7464126at2759"/>
<dbReference type="BioCyc" id="YEAST:G3O-32608-MONOMER"/>
<dbReference type="BioGRID-ORCS" id="855011">
    <property type="hits" value="0 hits in 10 CRISPR screens"/>
</dbReference>
<dbReference type="PRO" id="PR:P0CF17"/>
<dbReference type="Proteomes" id="UP000002311">
    <property type="component" value="Chromosome XIII"/>
</dbReference>
<dbReference type="RNAct" id="P0CF17">
    <property type="molecule type" value="protein"/>
</dbReference>
<dbReference type="Gene3D" id="1.25.40.20">
    <property type="entry name" value="Ankyrin repeat-containing domain"/>
    <property type="match status" value="1"/>
</dbReference>
<dbReference type="Gene3D" id="1.20.1050.80">
    <property type="entry name" value="VPS9 domain"/>
    <property type="match status" value="1"/>
</dbReference>
<dbReference type="InterPro" id="IPR036770">
    <property type="entry name" value="Ankyrin_rpt-contain_sf"/>
</dbReference>
<dbReference type="InterPro" id="IPR051248">
    <property type="entry name" value="UPF0507/Ank_repeat_27"/>
</dbReference>
<dbReference type="InterPro" id="IPR003123">
    <property type="entry name" value="VPS9"/>
</dbReference>
<dbReference type="InterPro" id="IPR037191">
    <property type="entry name" value="VPS9_dom_sf"/>
</dbReference>
<dbReference type="PANTHER" id="PTHR24170">
    <property type="entry name" value="ANKYRIN REPEAT DOMAIN-CONTAINING PROTEIN 27"/>
    <property type="match status" value="1"/>
</dbReference>
<dbReference type="PANTHER" id="PTHR24170:SF1">
    <property type="entry name" value="DOMAIN PROTEIN, PUTATIVE (AFU_ORTHOLOGUE AFUA_1G09870)-RELATED"/>
    <property type="match status" value="1"/>
</dbReference>
<dbReference type="Pfam" id="PF02204">
    <property type="entry name" value="VPS9"/>
    <property type="match status" value="1"/>
</dbReference>
<dbReference type="SUPFAM" id="SSF140860">
    <property type="entry name" value="Pseudo ankyrin repeat-like"/>
    <property type="match status" value="1"/>
</dbReference>
<dbReference type="SUPFAM" id="SSF109993">
    <property type="entry name" value="VPS9 domain"/>
    <property type="match status" value="1"/>
</dbReference>
<dbReference type="PROSITE" id="PS51205">
    <property type="entry name" value="VPS9"/>
    <property type="match status" value="1"/>
</dbReference>
<comment type="similarity">
    <text evidence="2">Belongs to the UPF0507 family.</text>
</comment>
<comment type="caution">
    <text evidence="2">This is a truncated version of an UPF0507 family protein. Strain S288c has a frameshift in position 286, which disrupts the gene coding for this protein and produces two ORFs YML003W and YML002W. A contiguous sequence for a S.cerevisiae UPF0507 family protein can be found in strain YJM789 (AC A6ZM60).</text>
</comment>
<proteinExistence type="inferred from homology"/>
<name>U5072_YEAST</name>
<organism>
    <name type="scientific">Saccharomyces cerevisiae (strain ATCC 204508 / S288c)</name>
    <name type="common">Baker's yeast</name>
    <dbReference type="NCBI Taxonomy" id="559292"/>
    <lineage>
        <taxon>Eukaryota</taxon>
        <taxon>Fungi</taxon>
        <taxon>Dikarya</taxon>
        <taxon>Ascomycota</taxon>
        <taxon>Saccharomycotina</taxon>
        <taxon>Saccharomycetes</taxon>
        <taxon>Saccharomycetales</taxon>
        <taxon>Saccharomycetaceae</taxon>
        <taxon>Saccharomyces</taxon>
    </lineage>
</organism>
<accession>P0CF17</accession>
<accession>D6VZH3</accession>
<accession>Q03665</accession>
<accession>Q04257</accession>
<accession>Q04263</accession>
<accession>Q6B2L5</accession>
<accession>Q6WV03</accession>
<evidence type="ECO:0000255" key="1">
    <source>
        <dbReference type="PROSITE-ProRule" id="PRU00550"/>
    </source>
</evidence>
<evidence type="ECO:0000305" key="2"/>
<protein>
    <recommendedName>
        <fullName>UPF0507 protein YML002W</fullName>
    </recommendedName>
</protein>
<reference key="1">
    <citation type="journal article" date="1997" name="Nature">
        <title>The nucleotide sequence of Saccharomyces cerevisiae chromosome XIII.</title>
        <authorList>
            <person name="Bowman S."/>
            <person name="Churcher C.M."/>
            <person name="Badcock K."/>
            <person name="Brown D."/>
            <person name="Chillingworth T."/>
            <person name="Connor R."/>
            <person name="Dedman K."/>
            <person name="Devlin K."/>
            <person name="Gentles S."/>
            <person name="Hamlin N."/>
            <person name="Hunt S."/>
            <person name="Jagels K."/>
            <person name="Lye G."/>
            <person name="Moule S."/>
            <person name="Odell C."/>
            <person name="Pearson D."/>
            <person name="Rajandream M.A."/>
            <person name="Rice P."/>
            <person name="Skelton J."/>
            <person name="Walsh S.V."/>
            <person name="Whitehead S."/>
            <person name="Barrell B.G."/>
        </authorList>
    </citation>
    <scope>NUCLEOTIDE SEQUENCE [LARGE SCALE GENOMIC DNA]</scope>
    <source>
        <strain>ATCC 204508 / S288c</strain>
    </source>
</reference>
<reference key="2">
    <citation type="journal article" date="2014" name="G3 (Bethesda)">
        <title>The reference genome sequence of Saccharomyces cerevisiae: Then and now.</title>
        <authorList>
            <person name="Engel S.R."/>
            <person name="Dietrich F.S."/>
            <person name="Fisk D.G."/>
            <person name="Binkley G."/>
            <person name="Balakrishnan R."/>
            <person name="Costanzo M.C."/>
            <person name="Dwight S.S."/>
            <person name="Hitz B.C."/>
            <person name="Karra K."/>
            <person name="Nash R.S."/>
            <person name="Weng S."/>
            <person name="Wong E.D."/>
            <person name="Lloyd P."/>
            <person name="Skrzypek M.S."/>
            <person name="Miyasato S.R."/>
            <person name="Simison M."/>
            <person name="Cherry J.M."/>
        </authorList>
    </citation>
    <scope>GENOME REANNOTATION</scope>
    <source>
        <strain>ATCC 204508 / S288c</strain>
    </source>
</reference>
<reference key="3">
    <citation type="journal article" date="2007" name="Genome Res.">
        <title>Approaching a complete repository of sequence-verified protein-encoding clones for Saccharomyces cerevisiae.</title>
        <authorList>
            <person name="Hu Y."/>
            <person name="Rolfs A."/>
            <person name="Bhullar B."/>
            <person name="Murthy T.V.S."/>
            <person name="Zhu C."/>
            <person name="Berger M.F."/>
            <person name="Camargo A.A."/>
            <person name="Kelley F."/>
            <person name="McCarron S."/>
            <person name="Jepson D."/>
            <person name="Richardson A."/>
            <person name="Raphael J."/>
            <person name="Moreira D."/>
            <person name="Taycher E."/>
            <person name="Zuo D."/>
            <person name="Mohr S."/>
            <person name="Kane M.F."/>
            <person name="Williamson J."/>
            <person name="Simpson A.J.G."/>
            <person name="Bulyk M.L."/>
            <person name="Harlow E."/>
            <person name="Marsischky G."/>
            <person name="Kolodner R.D."/>
            <person name="LaBaer J."/>
        </authorList>
    </citation>
    <scope>NUCLEOTIDE SEQUENCE [GENOMIC DNA]</scope>
    <source>
        <strain>ATCC 204508 / S288c</strain>
    </source>
</reference>
<sequence>MDSHQLELPDGLNNMTMDADTLISLFVLVVCRSEQKHLKSHLYYLQNFSNNSSSTKFGILGYAVSTLEAVVCYFEDFNKNTGNVAKANTLCEKTKNLLDKLSCENPTNEVEDLATYKDILTYRNEQGQSILSICITNHKNYILLDILSEYENDFPVEDLLEDETIDGSTLLIESIKAGNLEAAKVLIKIMLFNCTEEELVSYINKTDKYARTVAHYLTHEMDILKSIGNYIDWKRKNSSGQTPLFSIFRSYDQPNYEEMVKTAFDIANTWYRKHNSLFDYLDHTDNKGNSLLHVLKTNIPILLQLTKLDINEENYKGLTPLMVYVKYKRLSNIDAITKDRRLILEKVQNSTFFTCFDYAKDHSVLSKIGERGVKDSLFGLIYFHSLRYHNLNATTNITSVSNAEKPFATTVINMKTIQGLLRSILKDNPFTFLPLNTYIDEISHLNRSDLTIIGKTDVTSLLHQLTNCFNVLLFLKKIPENLFTDEASILYWMRINTSKRNQKPSGKENPKTMEPEEINMIQSFLRFNFDEISSFKASLNILRKVLIFINLKSDDFEDAYKGLNEMGRKLINSEASSAFKGIITNHNMFSELSLAALLENVRFLEQCTIQLSSFVQIILFEKIPNWWKHYGEFLALHKSYRKAFPNMVKPKSASDTSSRAPLGGFIETKREQSEQRLAVQIKASSKMLKELGSEIFVAHERLAEELSNYMEFRKACLDQRSLVAFATTNISVLQECV</sequence>
<feature type="chain" id="PRO_0000393363" description="UPF0507 protein YML002W">
    <location>
        <begin position="1"/>
        <end position="737"/>
    </location>
</feature>
<feature type="domain" description="VPS9" evidence="1">
    <location>
        <begin position="1"/>
        <end position="83"/>
    </location>
</feature>
<feature type="sequence conflict" description="In Ref. 3; AAT92734." evidence="2" ref="3">
    <original>R</original>
    <variation>S</variation>
    <location>
        <position position="32"/>
    </location>
</feature>